<feature type="chain" id="PRO_1000189937" description="Probable GTP-binding protein EngB">
    <location>
        <begin position="1"/>
        <end position="195"/>
    </location>
</feature>
<feature type="domain" description="EngB-type G" evidence="1">
    <location>
        <begin position="24"/>
        <end position="195"/>
    </location>
</feature>
<feature type="binding site" evidence="1">
    <location>
        <begin position="32"/>
        <end position="39"/>
    </location>
    <ligand>
        <name>GTP</name>
        <dbReference type="ChEBI" id="CHEBI:37565"/>
    </ligand>
</feature>
<feature type="binding site" evidence="1">
    <location>
        <position position="39"/>
    </location>
    <ligand>
        <name>Mg(2+)</name>
        <dbReference type="ChEBI" id="CHEBI:18420"/>
    </ligand>
</feature>
<feature type="binding site" evidence="1">
    <location>
        <begin position="59"/>
        <end position="63"/>
    </location>
    <ligand>
        <name>GTP</name>
        <dbReference type="ChEBI" id="CHEBI:37565"/>
    </ligand>
</feature>
<feature type="binding site" evidence="1">
    <location>
        <position position="61"/>
    </location>
    <ligand>
        <name>Mg(2+)</name>
        <dbReference type="ChEBI" id="CHEBI:18420"/>
    </ligand>
</feature>
<feature type="binding site" evidence="1">
    <location>
        <begin position="77"/>
        <end position="80"/>
    </location>
    <ligand>
        <name>GTP</name>
        <dbReference type="ChEBI" id="CHEBI:37565"/>
    </ligand>
</feature>
<feature type="binding site" evidence="1">
    <location>
        <begin position="144"/>
        <end position="147"/>
    </location>
    <ligand>
        <name>GTP</name>
        <dbReference type="ChEBI" id="CHEBI:37565"/>
    </ligand>
</feature>
<feature type="binding site" evidence="1">
    <location>
        <begin position="176"/>
        <end position="178"/>
    </location>
    <ligand>
        <name>GTP</name>
        <dbReference type="ChEBI" id="CHEBI:37565"/>
    </ligand>
</feature>
<comment type="function">
    <text evidence="1">Necessary for normal cell division and for the maintenance of normal septation.</text>
</comment>
<comment type="cofactor">
    <cofactor evidence="1">
        <name>Mg(2+)</name>
        <dbReference type="ChEBI" id="CHEBI:18420"/>
    </cofactor>
</comment>
<comment type="similarity">
    <text evidence="1">Belongs to the TRAFAC class TrmE-Era-EngA-EngB-Septin-like GTPase superfamily. EngB GTPase family.</text>
</comment>
<name>ENGB_STRPJ</name>
<reference key="1">
    <citation type="journal article" date="2009" name="J. Bacteriol.">
        <title>Role of conjugative elements in the evolution of the multidrug-resistant pandemic clone Streptococcus pneumoniae Spain23F ST81.</title>
        <authorList>
            <person name="Croucher N.J."/>
            <person name="Walker D."/>
            <person name="Romero P."/>
            <person name="Lennard N."/>
            <person name="Paterson G.K."/>
            <person name="Bason N.C."/>
            <person name="Mitchell A.M."/>
            <person name="Quail M.A."/>
            <person name="Andrew P.W."/>
            <person name="Parkhill J."/>
            <person name="Bentley S.D."/>
            <person name="Mitchell T.J."/>
        </authorList>
    </citation>
    <scope>NUCLEOTIDE SEQUENCE [LARGE SCALE GENOMIC DNA]</scope>
    <source>
        <strain>ATCC 700669 / Spain 23F-1</strain>
    </source>
</reference>
<sequence>MELNTHNAEILLSAANKSHYPQDELPEIALAGRSNVGKSSFINTMLNRKNLARTSGKPGKTQLLNFFNIDDKMRFVDVPGYGYARVSKKEREKWGRMIEEYLTTRENLRAVVSLVDLRHDPSADDVQMYEFLKYYEIPVIIVATKADKIPRGKWNKHESAIKKKLNFDPSDDFILFSSVSKAGMDEAWDAILEKL</sequence>
<accession>B8ZLT0</accession>
<protein>
    <recommendedName>
        <fullName evidence="1">Probable GTP-binding protein EngB</fullName>
    </recommendedName>
</protein>
<evidence type="ECO:0000255" key="1">
    <source>
        <dbReference type="HAMAP-Rule" id="MF_00321"/>
    </source>
</evidence>
<keyword id="KW-0131">Cell cycle</keyword>
<keyword id="KW-0132">Cell division</keyword>
<keyword id="KW-0342">GTP-binding</keyword>
<keyword id="KW-0460">Magnesium</keyword>
<keyword id="KW-0479">Metal-binding</keyword>
<keyword id="KW-0547">Nucleotide-binding</keyword>
<keyword id="KW-0717">Septation</keyword>
<proteinExistence type="inferred from homology"/>
<organism>
    <name type="scientific">Streptococcus pneumoniae (strain ATCC 700669 / Spain 23F-1)</name>
    <dbReference type="NCBI Taxonomy" id="561276"/>
    <lineage>
        <taxon>Bacteria</taxon>
        <taxon>Bacillati</taxon>
        <taxon>Bacillota</taxon>
        <taxon>Bacilli</taxon>
        <taxon>Lactobacillales</taxon>
        <taxon>Streptococcaceae</taxon>
        <taxon>Streptococcus</taxon>
    </lineage>
</organism>
<dbReference type="EMBL" id="FM211187">
    <property type="protein sequence ID" value="CAR69363.1"/>
    <property type="molecule type" value="Genomic_DNA"/>
</dbReference>
<dbReference type="SMR" id="B8ZLT0"/>
<dbReference type="KEGG" id="sne:SPN23F15850"/>
<dbReference type="HOGENOM" id="CLU_033732_3_0_9"/>
<dbReference type="GO" id="GO:0005829">
    <property type="term" value="C:cytosol"/>
    <property type="evidence" value="ECO:0007669"/>
    <property type="project" value="TreeGrafter"/>
</dbReference>
<dbReference type="GO" id="GO:0005525">
    <property type="term" value="F:GTP binding"/>
    <property type="evidence" value="ECO:0007669"/>
    <property type="project" value="UniProtKB-UniRule"/>
</dbReference>
<dbReference type="GO" id="GO:0046872">
    <property type="term" value="F:metal ion binding"/>
    <property type="evidence" value="ECO:0007669"/>
    <property type="project" value="UniProtKB-KW"/>
</dbReference>
<dbReference type="GO" id="GO:0000917">
    <property type="term" value="P:division septum assembly"/>
    <property type="evidence" value="ECO:0007669"/>
    <property type="project" value="UniProtKB-KW"/>
</dbReference>
<dbReference type="CDD" id="cd01876">
    <property type="entry name" value="YihA_EngB"/>
    <property type="match status" value="1"/>
</dbReference>
<dbReference type="FunFam" id="3.40.50.300:FF:000098">
    <property type="entry name" value="Probable GTP-binding protein EngB"/>
    <property type="match status" value="1"/>
</dbReference>
<dbReference type="Gene3D" id="3.40.50.300">
    <property type="entry name" value="P-loop containing nucleotide triphosphate hydrolases"/>
    <property type="match status" value="1"/>
</dbReference>
<dbReference type="HAMAP" id="MF_00321">
    <property type="entry name" value="GTPase_EngB"/>
    <property type="match status" value="1"/>
</dbReference>
<dbReference type="InterPro" id="IPR030393">
    <property type="entry name" value="G_ENGB_dom"/>
</dbReference>
<dbReference type="InterPro" id="IPR006073">
    <property type="entry name" value="GTP-bd"/>
</dbReference>
<dbReference type="InterPro" id="IPR019987">
    <property type="entry name" value="GTP-bd_ribosome_bio_YsxC"/>
</dbReference>
<dbReference type="InterPro" id="IPR027417">
    <property type="entry name" value="P-loop_NTPase"/>
</dbReference>
<dbReference type="NCBIfam" id="TIGR03598">
    <property type="entry name" value="GTPase_YsxC"/>
    <property type="match status" value="1"/>
</dbReference>
<dbReference type="PANTHER" id="PTHR11649:SF13">
    <property type="entry name" value="ENGB-TYPE G DOMAIN-CONTAINING PROTEIN"/>
    <property type="match status" value="1"/>
</dbReference>
<dbReference type="PANTHER" id="PTHR11649">
    <property type="entry name" value="MSS1/TRME-RELATED GTP-BINDING PROTEIN"/>
    <property type="match status" value="1"/>
</dbReference>
<dbReference type="Pfam" id="PF01926">
    <property type="entry name" value="MMR_HSR1"/>
    <property type="match status" value="1"/>
</dbReference>
<dbReference type="PRINTS" id="PR00449">
    <property type="entry name" value="RASTRNSFRMNG"/>
</dbReference>
<dbReference type="SUPFAM" id="SSF52540">
    <property type="entry name" value="P-loop containing nucleoside triphosphate hydrolases"/>
    <property type="match status" value="1"/>
</dbReference>
<dbReference type="PROSITE" id="PS51706">
    <property type="entry name" value="G_ENGB"/>
    <property type="match status" value="1"/>
</dbReference>
<gene>
    <name evidence="1" type="primary">engB</name>
    <name type="ordered locus">SPN23F15850</name>
</gene>